<gene>
    <name evidence="1" type="primary">frr</name>
    <name type="ordered locus">BURPS1106A_2490</name>
</gene>
<accession>A3NWM8</accession>
<reference key="1">
    <citation type="journal article" date="2010" name="Genome Biol. Evol.">
        <title>Continuing evolution of Burkholderia mallei through genome reduction and large-scale rearrangements.</title>
        <authorList>
            <person name="Losada L."/>
            <person name="Ronning C.M."/>
            <person name="DeShazer D."/>
            <person name="Woods D."/>
            <person name="Fedorova N."/>
            <person name="Kim H.S."/>
            <person name="Shabalina S.A."/>
            <person name="Pearson T.R."/>
            <person name="Brinkac L."/>
            <person name="Tan P."/>
            <person name="Nandi T."/>
            <person name="Crabtree J."/>
            <person name="Badger J."/>
            <person name="Beckstrom-Sternberg S."/>
            <person name="Saqib M."/>
            <person name="Schutzer S.E."/>
            <person name="Keim P."/>
            <person name="Nierman W.C."/>
        </authorList>
    </citation>
    <scope>NUCLEOTIDE SEQUENCE [LARGE SCALE GENOMIC DNA]</scope>
    <source>
        <strain>1106a</strain>
    </source>
</reference>
<evidence type="ECO:0000255" key="1">
    <source>
        <dbReference type="HAMAP-Rule" id="MF_00040"/>
    </source>
</evidence>
<keyword id="KW-0963">Cytoplasm</keyword>
<keyword id="KW-0648">Protein biosynthesis</keyword>
<organism>
    <name type="scientific">Burkholderia pseudomallei (strain 1106a)</name>
    <dbReference type="NCBI Taxonomy" id="357348"/>
    <lineage>
        <taxon>Bacteria</taxon>
        <taxon>Pseudomonadati</taxon>
        <taxon>Pseudomonadota</taxon>
        <taxon>Betaproteobacteria</taxon>
        <taxon>Burkholderiales</taxon>
        <taxon>Burkholderiaceae</taxon>
        <taxon>Burkholderia</taxon>
        <taxon>pseudomallei group</taxon>
    </lineage>
</organism>
<name>RRF_BURP0</name>
<proteinExistence type="inferred from homology"/>
<protein>
    <recommendedName>
        <fullName evidence="1">Ribosome-recycling factor</fullName>
        <shortName evidence="1">RRF</shortName>
    </recommendedName>
    <alternativeName>
        <fullName evidence="1">Ribosome-releasing factor</fullName>
    </alternativeName>
</protein>
<feature type="chain" id="PRO_1000003121" description="Ribosome-recycling factor">
    <location>
        <begin position="1"/>
        <end position="186"/>
    </location>
</feature>
<sequence>MSVADIKKSVEQKMQRSIEAFKNDLAKIRTGRAHTGLLDHVQVDYYGSMVPISQVANLTLVDARTIGVQPWEKTMVAKVEKAIREADLGLNPATSGDLIRVPMPPLTEERRRELTKVVKSEGETAKVAVRNLRRDANEQLKKLVKDKEISEDDERRASDDVQKLTDKHVAEIDKLVQAKDAEIMTV</sequence>
<dbReference type="EMBL" id="CP000572">
    <property type="protein sequence ID" value="ABN92094.1"/>
    <property type="molecule type" value="Genomic_DNA"/>
</dbReference>
<dbReference type="RefSeq" id="WP_004192143.1">
    <property type="nucleotide sequence ID" value="NC_009076.1"/>
</dbReference>
<dbReference type="SMR" id="A3NWM8"/>
<dbReference type="GeneID" id="93060697"/>
<dbReference type="KEGG" id="bpl:BURPS1106A_2490"/>
<dbReference type="HOGENOM" id="CLU_073981_2_1_4"/>
<dbReference type="Proteomes" id="UP000006738">
    <property type="component" value="Chromosome I"/>
</dbReference>
<dbReference type="GO" id="GO:0005829">
    <property type="term" value="C:cytosol"/>
    <property type="evidence" value="ECO:0007669"/>
    <property type="project" value="GOC"/>
</dbReference>
<dbReference type="GO" id="GO:0043023">
    <property type="term" value="F:ribosomal large subunit binding"/>
    <property type="evidence" value="ECO:0007669"/>
    <property type="project" value="TreeGrafter"/>
</dbReference>
<dbReference type="GO" id="GO:0002184">
    <property type="term" value="P:cytoplasmic translational termination"/>
    <property type="evidence" value="ECO:0007669"/>
    <property type="project" value="TreeGrafter"/>
</dbReference>
<dbReference type="CDD" id="cd00520">
    <property type="entry name" value="RRF"/>
    <property type="match status" value="1"/>
</dbReference>
<dbReference type="FunFam" id="1.10.132.20:FF:000001">
    <property type="entry name" value="Ribosome-recycling factor"/>
    <property type="match status" value="1"/>
</dbReference>
<dbReference type="FunFam" id="3.30.1360.40:FF:000001">
    <property type="entry name" value="Ribosome-recycling factor"/>
    <property type="match status" value="1"/>
</dbReference>
<dbReference type="Gene3D" id="3.30.1360.40">
    <property type="match status" value="1"/>
</dbReference>
<dbReference type="Gene3D" id="1.10.132.20">
    <property type="entry name" value="Ribosome-recycling factor"/>
    <property type="match status" value="1"/>
</dbReference>
<dbReference type="HAMAP" id="MF_00040">
    <property type="entry name" value="RRF"/>
    <property type="match status" value="1"/>
</dbReference>
<dbReference type="InterPro" id="IPR002661">
    <property type="entry name" value="Ribosome_recyc_fac"/>
</dbReference>
<dbReference type="InterPro" id="IPR023584">
    <property type="entry name" value="Ribosome_recyc_fac_dom"/>
</dbReference>
<dbReference type="InterPro" id="IPR036191">
    <property type="entry name" value="RRF_sf"/>
</dbReference>
<dbReference type="NCBIfam" id="TIGR00496">
    <property type="entry name" value="frr"/>
    <property type="match status" value="1"/>
</dbReference>
<dbReference type="PANTHER" id="PTHR20982:SF3">
    <property type="entry name" value="MITOCHONDRIAL RIBOSOME RECYCLING FACTOR PSEUDO 1"/>
    <property type="match status" value="1"/>
</dbReference>
<dbReference type="PANTHER" id="PTHR20982">
    <property type="entry name" value="RIBOSOME RECYCLING FACTOR"/>
    <property type="match status" value="1"/>
</dbReference>
<dbReference type="Pfam" id="PF01765">
    <property type="entry name" value="RRF"/>
    <property type="match status" value="1"/>
</dbReference>
<dbReference type="SUPFAM" id="SSF55194">
    <property type="entry name" value="Ribosome recycling factor, RRF"/>
    <property type="match status" value="1"/>
</dbReference>
<comment type="function">
    <text evidence="1">Responsible for the release of ribosomes from messenger RNA at the termination of protein biosynthesis. May increase the efficiency of translation by recycling ribosomes from one round of translation to another.</text>
</comment>
<comment type="subcellular location">
    <subcellularLocation>
        <location evidence="1">Cytoplasm</location>
    </subcellularLocation>
</comment>
<comment type="similarity">
    <text evidence="1">Belongs to the RRF family.</text>
</comment>